<gene>
    <name type="ordered locus">MJ0945</name>
</gene>
<dbReference type="EMBL" id="L77117">
    <property type="protein sequence ID" value="AAB98955.1"/>
    <property type="molecule type" value="Genomic_DNA"/>
</dbReference>
<dbReference type="PIR" id="A64418">
    <property type="entry name" value="A64418"/>
</dbReference>
<dbReference type="SMR" id="Q58355"/>
<dbReference type="STRING" id="243232.MJ_0945"/>
<dbReference type="PaxDb" id="243232-MJ_0945"/>
<dbReference type="EnsemblBacteria" id="AAB98955">
    <property type="protein sequence ID" value="AAB98955"/>
    <property type="gene ID" value="MJ_0945"/>
</dbReference>
<dbReference type="KEGG" id="mja:MJ_0945"/>
<dbReference type="eggNOG" id="arCOG08285">
    <property type="taxonomic scope" value="Archaea"/>
</dbReference>
<dbReference type="HOGENOM" id="CLU_1313146_0_0_2"/>
<dbReference type="InParanoid" id="Q58355"/>
<dbReference type="OrthoDB" id="64717at2157"/>
<dbReference type="Proteomes" id="UP000000805">
    <property type="component" value="Chromosome"/>
</dbReference>
<dbReference type="GO" id="GO:0016020">
    <property type="term" value="C:membrane"/>
    <property type="evidence" value="ECO:0007669"/>
    <property type="project" value="UniProtKB-SubCell"/>
</dbReference>
<dbReference type="GO" id="GO:0016787">
    <property type="term" value="F:hydrolase activity"/>
    <property type="evidence" value="ECO:0007669"/>
    <property type="project" value="InterPro"/>
</dbReference>
<dbReference type="Gene3D" id="2.60.120.560">
    <property type="entry name" value="Exo-inulinase, domain 1"/>
    <property type="match status" value="1"/>
</dbReference>
<dbReference type="InterPro" id="IPR010496">
    <property type="entry name" value="3-keto-disaccharide_hydrolase"/>
</dbReference>
<dbReference type="Pfam" id="PF06439">
    <property type="entry name" value="3keto-disac_hyd"/>
    <property type="match status" value="1"/>
</dbReference>
<sequence length="224" mass="25416">MLLRQYINVPRLGEIMNLKELTVILIIPIVYLGVCGCFEIVPKSFYDNFSSYNVGDKAPFGEWKVKEGGFKIEAILSEDKKTLNKVAVPINNGIIYIDKNYTDFKFIVDIKRLEESDSPKIYFRLINNANAGYYIDIEGFDRGYVLYKFNGTKVEKLAESYDAAPAGTDFYRYEVVAKDNKIIFLAGGQKYIEYTDNNTPILKGGIGIGGGRAYYDNVRVEPIE</sequence>
<reference key="1">
    <citation type="journal article" date="1996" name="Science">
        <title>Complete genome sequence of the methanogenic archaeon, Methanococcus jannaschii.</title>
        <authorList>
            <person name="Bult C.J."/>
            <person name="White O."/>
            <person name="Olsen G.J."/>
            <person name="Zhou L."/>
            <person name="Fleischmann R.D."/>
            <person name="Sutton G.G."/>
            <person name="Blake J.A."/>
            <person name="FitzGerald L.M."/>
            <person name="Clayton R.A."/>
            <person name="Gocayne J.D."/>
            <person name="Kerlavage A.R."/>
            <person name="Dougherty B.A."/>
            <person name="Tomb J.-F."/>
            <person name="Adams M.D."/>
            <person name="Reich C.I."/>
            <person name="Overbeek R."/>
            <person name="Kirkness E.F."/>
            <person name="Weinstock K.G."/>
            <person name="Merrick J.M."/>
            <person name="Glodek A."/>
            <person name="Scott J.L."/>
            <person name="Geoghagen N.S.M."/>
            <person name="Weidman J.F."/>
            <person name="Fuhrmann J.L."/>
            <person name="Nguyen D."/>
            <person name="Utterback T.R."/>
            <person name="Kelley J.M."/>
            <person name="Peterson J.D."/>
            <person name="Sadow P.W."/>
            <person name="Hanna M.C."/>
            <person name="Cotton M.D."/>
            <person name="Roberts K.M."/>
            <person name="Hurst M.A."/>
            <person name="Kaine B.P."/>
            <person name="Borodovsky M."/>
            <person name="Klenk H.-P."/>
            <person name="Fraser C.M."/>
            <person name="Smith H.O."/>
            <person name="Woese C.R."/>
            <person name="Venter J.C."/>
        </authorList>
    </citation>
    <scope>NUCLEOTIDE SEQUENCE [LARGE SCALE GENOMIC DNA]</scope>
    <source>
        <strain>ATCC 43067 / DSM 2661 / JAL-1 / JCM 10045 / NBRC 100440</strain>
    </source>
</reference>
<comment type="subcellular location">
    <subcellularLocation>
        <location evidence="2">Membrane</location>
        <topology evidence="2">Single-pass membrane protein</topology>
    </subcellularLocation>
</comment>
<proteinExistence type="predicted"/>
<name>Y945_METJA</name>
<protein>
    <recommendedName>
        <fullName>Uncharacterized protein MJ0945</fullName>
    </recommendedName>
</protein>
<keyword id="KW-0472">Membrane</keyword>
<keyword id="KW-1185">Reference proteome</keyword>
<keyword id="KW-0812">Transmembrane</keyword>
<keyword id="KW-1133">Transmembrane helix</keyword>
<evidence type="ECO:0000255" key="1"/>
<evidence type="ECO:0000305" key="2"/>
<organism>
    <name type="scientific">Methanocaldococcus jannaschii (strain ATCC 43067 / DSM 2661 / JAL-1 / JCM 10045 / NBRC 100440)</name>
    <name type="common">Methanococcus jannaschii</name>
    <dbReference type="NCBI Taxonomy" id="243232"/>
    <lineage>
        <taxon>Archaea</taxon>
        <taxon>Methanobacteriati</taxon>
        <taxon>Methanobacteriota</taxon>
        <taxon>Methanomada group</taxon>
        <taxon>Methanococci</taxon>
        <taxon>Methanococcales</taxon>
        <taxon>Methanocaldococcaceae</taxon>
        <taxon>Methanocaldococcus</taxon>
    </lineage>
</organism>
<feature type="chain" id="PRO_0000107116" description="Uncharacterized protein MJ0945">
    <location>
        <begin position="1"/>
        <end position="224"/>
    </location>
</feature>
<feature type="transmembrane region" description="Helical" evidence="1">
    <location>
        <begin position="21"/>
        <end position="41"/>
    </location>
</feature>
<accession>Q58355</accession>